<accession>Q5H3V0</accession>
<protein>
    <recommendedName>
        <fullName evidence="1">C4-dicarboxylate transport protein</fullName>
    </recommendedName>
</protein>
<organism>
    <name type="scientific">Xanthomonas oryzae pv. oryzae (strain KACC10331 / KXO85)</name>
    <dbReference type="NCBI Taxonomy" id="291331"/>
    <lineage>
        <taxon>Bacteria</taxon>
        <taxon>Pseudomonadati</taxon>
        <taxon>Pseudomonadota</taxon>
        <taxon>Gammaproteobacteria</taxon>
        <taxon>Lysobacterales</taxon>
        <taxon>Lysobacteraceae</taxon>
        <taxon>Xanthomonas</taxon>
    </lineage>
</organism>
<dbReference type="EMBL" id="AE013598">
    <property type="protein sequence ID" value="AAW74371.1"/>
    <property type="status" value="ALT_INIT"/>
    <property type="molecule type" value="Genomic_DNA"/>
</dbReference>
<dbReference type="SMR" id="Q5H3V0"/>
<dbReference type="STRING" id="291331.XOO1117"/>
<dbReference type="KEGG" id="xoo:XOO1117"/>
<dbReference type="HOGENOM" id="CLU_019375_7_0_6"/>
<dbReference type="Proteomes" id="UP000006735">
    <property type="component" value="Chromosome"/>
</dbReference>
<dbReference type="GO" id="GO:0005886">
    <property type="term" value="C:plasma membrane"/>
    <property type="evidence" value="ECO:0007669"/>
    <property type="project" value="UniProtKB-SubCell"/>
</dbReference>
<dbReference type="GO" id="GO:0015138">
    <property type="term" value="F:fumarate transmembrane transporter activity"/>
    <property type="evidence" value="ECO:0007669"/>
    <property type="project" value="TreeGrafter"/>
</dbReference>
<dbReference type="GO" id="GO:0015366">
    <property type="term" value="F:malate:proton symporter activity"/>
    <property type="evidence" value="ECO:0007669"/>
    <property type="project" value="TreeGrafter"/>
</dbReference>
<dbReference type="GO" id="GO:0015141">
    <property type="term" value="F:succinate transmembrane transporter activity"/>
    <property type="evidence" value="ECO:0007669"/>
    <property type="project" value="TreeGrafter"/>
</dbReference>
<dbReference type="GO" id="GO:0070778">
    <property type="term" value="P:L-aspartate transmembrane transport"/>
    <property type="evidence" value="ECO:0007669"/>
    <property type="project" value="TreeGrafter"/>
</dbReference>
<dbReference type="FunFam" id="1.10.3860.10:FF:000001">
    <property type="entry name" value="C4-dicarboxylate transport protein"/>
    <property type="match status" value="1"/>
</dbReference>
<dbReference type="Gene3D" id="1.10.3860.10">
    <property type="entry name" value="Sodium:dicarboxylate symporter"/>
    <property type="match status" value="1"/>
</dbReference>
<dbReference type="HAMAP" id="MF_01300">
    <property type="entry name" value="C4_dicarb_transport"/>
    <property type="match status" value="1"/>
</dbReference>
<dbReference type="InterPro" id="IPR023954">
    <property type="entry name" value="C4_dicarb_transport"/>
</dbReference>
<dbReference type="InterPro" id="IPR001991">
    <property type="entry name" value="Na-dicarboxylate_symporter"/>
</dbReference>
<dbReference type="InterPro" id="IPR018107">
    <property type="entry name" value="Na-dicarboxylate_symporter_CS"/>
</dbReference>
<dbReference type="InterPro" id="IPR036458">
    <property type="entry name" value="Na:dicarbo_symporter_sf"/>
</dbReference>
<dbReference type="NCBIfam" id="NF002461">
    <property type="entry name" value="PRK01663.1"/>
    <property type="match status" value="1"/>
</dbReference>
<dbReference type="NCBIfam" id="NF009587">
    <property type="entry name" value="PRK13027.1"/>
    <property type="match status" value="1"/>
</dbReference>
<dbReference type="PANTHER" id="PTHR42865:SF1">
    <property type="entry name" value="AEROBIC C4-DICARBOXYLATE TRANSPORT PROTEIN"/>
    <property type="match status" value="1"/>
</dbReference>
<dbReference type="PANTHER" id="PTHR42865">
    <property type="entry name" value="PROTON/GLUTAMATE-ASPARTATE SYMPORTER"/>
    <property type="match status" value="1"/>
</dbReference>
<dbReference type="Pfam" id="PF00375">
    <property type="entry name" value="SDF"/>
    <property type="match status" value="1"/>
</dbReference>
<dbReference type="PRINTS" id="PR00173">
    <property type="entry name" value="EDTRNSPORT"/>
</dbReference>
<dbReference type="SUPFAM" id="SSF118215">
    <property type="entry name" value="Proton glutamate symport protein"/>
    <property type="match status" value="1"/>
</dbReference>
<dbReference type="PROSITE" id="PS00713">
    <property type="entry name" value="NA_DICARBOXYL_SYMP_1"/>
    <property type="match status" value="1"/>
</dbReference>
<dbReference type="PROSITE" id="PS00714">
    <property type="entry name" value="NA_DICARBOXYL_SYMP_2"/>
    <property type="match status" value="1"/>
</dbReference>
<reference key="1">
    <citation type="journal article" date="2005" name="Nucleic Acids Res.">
        <title>The genome sequence of Xanthomonas oryzae pathovar oryzae KACC10331, the bacterial blight pathogen of rice.</title>
        <authorList>
            <person name="Lee B.-M."/>
            <person name="Park Y.-J."/>
            <person name="Park D.-S."/>
            <person name="Kang H.-W."/>
            <person name="Kim J.-G."/>
            <person name="Song E.-S."/>
            <person name="Park I.-C."/>
            <person name="Yoon U.-H."/>
            <person name="Hahn J.-H."/>
            <person name="Koo B.-S."/>
            <person name="Lee G.-B."/>
            <person name="Kim H."/>
            <person name="Park H.-S."/>
            <person name="Yoon K.-O."/>
            <person name="Kim J.-H."/>
            <person name="Jung C.-H."/>
            <person name="Koh N.-H."/>
            <person name="Seo J.-S."/>
            <person name="Go S.-J."/>
        </authorList>
    </citation>
    <scope>NUCLEOTIDE SEQUENCE [LARGE SCALE GENOMIC DNA]</scope>
    <source>
        <strain>KACC10331 / KXO85</strain>
    </source>
</reference>
<sequence>MHISKPAGPLPASVPFYRQLYFQVVVAIILGALLGRFEPAFAESLKPLGDAFIKLVKMIIAPVIFLTIVTGIAGMTHLKTVGRVFGKAMVYFLFFSTLALVVGLVVAHVVQPGAGMNINPADLDQSAVKSYVEKSHDLTLVGFLMDIIPNSLIGAFTGDQVVNGKLTGPNILQVLFVAVLFGVSLALVGERGKPVLNLLEALIAPVFKLVHILMRAAPIGAFGAIAFTIGKYGVESLVNLAWLVGSFYLTSLLFVLVILGVVCRLCGFSVLKLIRYLKAELLLVLGTSSSESALPSLMEKMEKAGCEKSVVGLVVPTGYSFNLDGTNIYMTLAALFIAQATNTELTLGHQIALLAVAMLSSKGAAGVTGAGFITLAATLAVVPEVPVAGMALILGVDRFMSECRSLTNFIGNAVATVVVSRWENALDRDRLTLVLDGGEPPLLAPVGEPGVAPAALR</sequence>
<gene>
    <name evidence="1" type="primary">dctA</name>
    <name type="ordered locus">XOO1117</name>
</gene>
<name>DCTA_XANOR</name>
<keyword id="KW-0997">Cell inner membrane</keyword>
<keyword id="KW-1003">Cell membrane</keyword>
<keyword id="KW-0472">Membrane</keyword>
<keyword id="KW-1185">Reference proteome</keyword>
<keyword id="KW-0769">Symport</keyword>
<keyword id="KW-0812">Transmembrane</keyword>
<keyword id="KW-1133">Transmembrane helix</keyword>
<keyword id="KW-0813">Transport</keyword>
<feature type="chain" id="PRO_0000322008" description="C4-dicarboxylate transport protein">
    <location>
        <begin position="1"/>
        <end position="457"/>
    </location>
</feature>
<feature type="transmembrane region" description="Helical" evidence="1">
    <location>
        <begin position="22"/>
        <end position="42"/>
    </location>
</feature>
<feature type="transmembrane region" description="Helical" evidence="1">
    <location>
        <begin position="55"/>
        <end position="75"/>
    </location>
</feature>
<feature type="transmembrane region" description="Helical" evidence="1">
    <location>
        <begin position="90"/>
        <end position="110"/>
    </location>
</feature>
<feature type="transmembrane region" description="Helical" evidence="1">
    <location>
        <begin position="138"/>
        <end position="158"/>
    </location>
</feature>
<feature type="transmembrane region" description="Helical" evidence="1">
    <location>
        <begin position="168"/>
        <end position="188"/>
    </location>
</feature>
<feature type="transmembrane region" description="Helical" evidence="1">
    <location>
        <begin position="209"/>
        <end position="229"/>
    </location>
</feature>
<feature type="transmembrane region" description="Helical" evidence="1">
    <location>
        <begin position="242"/>
        <end position="262"/>
    </location>
</feature>
<feature type="transmembrane region" description="Helical" evidence="1">
    <location>
        <begin position="335"/>
        <end position="357"/>
    </location>
</feature>
<feature type="transmembrane region" description="Helical" evidence="1">
    <location>
        <begin position="376"/>
        <end position="396"/>
    </location>
</feature>
<comment type="function">
    <text evidence="1">Responsible for the transport of dicarboxylates such as succinate, fumarate, and malate from the periplasm across the membrane.</text>
</comment>
<comment type="subcellular location">
    <subcellularLocation>
        <location evidence="1">Cell inner membrane</location>
        <topology evidence="1">Multi-pass membrane protein</topology>
    </subcellularLocation>
</comment>
<comment type="similarity">
    <text evidence="1">Belongs to the dicarboxylate/amino acid:cation symporter (DAACS) (TC 2.A.23) family.</text>
</comment>
<comment type="sequence caution" evidence="2">
    <conflict type="erroneous initiation">
        <sequence resource="EMBL-CDS" id="AAW74371"/>
    </conflict>
</comment>
<proteinExistence type="inferred from homology"/>
<evidence type="ECO:0000255" key="1">
    <source>
        <dbReference type="HAMAP-Rule" id="MF_01300"/>
    </source>
</evidence>
<evidence type="ECO:0000305" key="2"/>